<name>MPP7_DANRE</name>
<feature type="chain" id="PRO_0000320030" description="MAGUK p55 subfamily member 7">
    <location>
        <begin position="1"/>
        <end position="576"/>
    </location>
</feature>
<feature type="domain" description="L27 1" evidence="5">
    <location>
        <begin position="10"/>
        <end position="64"/>
    </location>
</feature>
<feature type="domain" description="L27 2" evidence="5">
    <location>
        <begin position="65"/>
        <end position="122"/>
    </location>
</feature>
<feature type="domain" description="PDZ" evidence="3">
    <location>
        <begin position="139"/>
        <end position="220"/>
    </location>
</feature>
<feature type="domain" description="SH3" evidence="4">
    <location>
        <begin position="228"/>
        <end position="298"/>
    </location>
</feature>
<feature type="domain" description="Guanylate kinase-like" evidence="2">
    <location>
        <begin position="368"/>
        <end position="560"/>
    </location>
</feature>
<feature type="mutagenesis site" description="In hmp; leads to vertebral ankylosis; when associated with N-556." evidence="6">
    <original>R</original>
    <variation>H</variation>
    <location>
        <position position="453"/>
    </location>
</feature>
<feature type="mutagenesis site" description="In hmp; leads to vertebral ankylosis; when associated with H-453." evidence="6">
    <original>K</original>
    <variation>N</variation>
    <location>
        <position position="556"/>
    </location>
</feature>
<feature type="sequence conflict" description="In Ref. 1; AAD39392." evidence="7" ref="1">
    <original>A</original>
    <variation>V</variation>
    <location>
        <position position="173"/>
    </location>
</feature>
<feature type="sequence conflict" description="In Ref. 1; AAD39392." evidence="7" ref="1">
    <original>P</original>
    <variation>A</variation>
    <location>
        <position position="229"/>
    </location>
</feature>
<accession>Q6P0D7</accession>
<accession>Q9PWC1</accession>
<accession>Q9W7F1</accession>
<organism>
    <name type="scientific">Danio rerio</name>
    <name type="common">Zebrafish</name>
    <name type="synonym">Brachydanio rerio</name>
    <dbReference type="NCBI Taxonomy" id="7955"/>
    <lineage>
        <taxon>Eukaryota</taxon>
        <taxon>Metazoa</taxon>
        <taxon>Chordata</taxon>
        <taxon>Craniata</taxon>
        <taxon>Vertebrata</taxon>
        <taxon>Euteleostomi</taxon>
        <taxon>Actinopterygii</taxon>
        <taxon>Neopterygii</taxon>
        <taxon>Teleostei</taxon>
        <taxon>Ostariophysi</taxon>
        <taxon>Cypriniformes</taxon>
        <taxon>Danionidae</taxon>
        <taxon>Danioninae</taxon>
        <taxon>Danio</taxon>
    </lineage>
</organism>
<gene>
    <name type="primary">mpp7</name>
    <name type="synonym">dlg3</name>
    <name type="synonym">hmp</name>
</gene>
<sequence length="576" mass="65192">MPALSSRSGSEMGLYELLSVLPSQLQPHVESPDDRSFLHAMFGERSLHSLVKIHEKLQCYEDCAPTPVLDSAGSLAADLTEELQARSASNEIRELVKLLSKPHVKSLLSVHDTVAKKSYDPELPPLPDDIDDEEDSVKIIRLVKNKEPLGATIKKDEHTGAILVARILRGGAADRSGLIHVGDELKEVNGIPVDDKKPEEIIRILSQSQGAITFKVVPGIKDEAQSKEPKMFIKALFDYNPAEDKAIPCKEAGLGFKKGDILQVMSQDDATWWQAKLEGDGNLRAGLIPSKHFQERRLAVWRPTPVMTLQRTSSKRFSGLRRSFRLSRRDKKTNKSMYECKKSEQYDTADVPTYEEVTTYRRKHGDRHRLVVLVGPTGVGLNELKRKLLISDTQHFSVTIPHTSRSKRHQESEGVEYHFISKNLFEADIQNNKFIEHGEYKGNYYGTSFDSVRSVLSKNKVCLLDVQPHTLKHLRTAEFKPYVVFVKPPCIERLRETRRNAKVISGKDDKTSSKAFSEEDFLEMISASQMMENQYGHLFEKVIVNDDLTVAFSELKQALKKVETEAHWVPISWTHS</sequence>
<proteinExistence type="evidence at protein level"/>
<protein>
    <recommendedName>
        <fullName>MAGUK p55 subfamily member 7</fullName>
    </recommendedName>
    <alternativeName>
        <fullName>Protein humpback</fullName>
    </alternativeName>
</protein>
<reference key="1">
    <citation type="journal article" date="1999" name="Mech. Dev.">
        <title>A recessive mutation leading to vertebral ankylosis in zebrafish is associated with amino acid alterations in the homologue of the human membrane-associated guanylate kinase DLG3.</title>
        <authorList>
            <person name="Koenig C."/>
            <person name="Yan Y.L."/>
            <person name="Postlethwait J."/>
            <person name="Wendler S."/>
            <person name="Campos-Ortega J.A."/>
        </authorList>
    </citation>
    <scope>NUCLEOTIDE SEQUENCE [MRNA]</scope>
    <scope>NUCLEOTIDE SEQUENCE [GENOMIC DNA] OF 14-52</scope>
    <scope>MUTAGENESIS OF ARG-453 AND LYS-556</scope>
</reference>
<reference key="2">
    <citation type="submission" date="2004-01" db="EMBL/GenBank/DDBJ databases">
        <authorList>
            <consortium name="NIH - Zebrafish Gene Collection (ZGC) project"/>
        </authorList>
    </citation>
    <scope>NUCLEOTIDE SEQUENCE [LARGE SCALE MRNA]</scope>
    <source>
        <tissue>Embryo</tissue>
    </source>
</reference>
<dbReference type="EMBL" id="AF124435">
    <property type="protein sequence ID" value="AAD39392.1"/>
    <property type="molecule type" value="mRNA"/>
</dbReference>
<dbReference type="EMBL" id="AF124436">
    <property type="protein sequence ID" value="AAD39393.1"/>
    <property type="molecule type" value="Genomic_DNA"/>
</dbReference>
<dbReference type="EMBL" id="BC065660">
    <property type="protein sequence ID" value="AAH65660.1"/>
    <property type="molecule type" value="mRNA"/>
</dbReference>
<dbReference type="RefSeq" id="NP_571051.1">
    <property type="nucleotide sequence ID" value="NM_130976.1"/>
</dbReference>
<dbReference type="RefSeq" id="XP_009304860.1">
    <property type="nucleotide sequence ID" value="XM_009306585.2"/>
</dbReference>
<dbReference type="SMR" id="Q6P0D7"/>
<dbReference type="FunCoup" id="Q6P0D7">
    <property type="interactions" value="386"/>
</dbReference>
<dbReference type="STRING" id="7955.ENSDARP00000141751"/>
<dbReference type="PaxDb" id="7955-ENSDARP00000072380"/>
<dbReference type="ABCD" id="Q6P0D7">
    <property type="antibodies" value="1 sequenced antibody"/>
</dbReference>
<dbReference type="Ensembl" id="ENSDART00000170376">
    <property type="protein sequence ID" value="ENSDARP00000141751"/>
    <property type="gene ID" value="ENSDARG00000102470"/>
</dbReference>
<dbReference type="Ensembl" id="ENSDART00000181711">
    <property type="protein sequence ID" value="ENSDARP00000152963"/>
    <property type="gene ID" value="ENSDARG00000102470"/>
</dbReference>
<dbReference type="GeneID" id="30166"/>
<dbReference type="KEGG" id="dre:30166"/>
<dbReference type="AGR" id="ZFIN:ZDB-GENE-991209-8"/>
<dbReference type="CTD" id="30166"/>
<dbReference type="ZFIN" id="ZDB-GENE-991209-8">
    <property type="gene designation" value="mpp7a"/>
</dbReference>
<dbReference type="eggNOG" id="KOG0609">
    <property type="taxonomic scope" value="Eukaryota"/>
</dbReference>
<dbReference type="InParanoid" id="Q6P0D7"/>
<dbReference type="OMA" id="EIIQILX"/>
<dbReference type="OrthoDB" id="439127at2759"/>
<dbReference type="PhylomeDB" id="Q6P0D7"/>
<dbReference type="TreeFam" id="TF314263"/>
<dbReference type="Reactome" id="R-DRE-9013404">
    <property type="pathway name" value="RAC2 GTPase cycle"/>
</dbReference>
<dbReference type="Reactome" id="R-DRE-9013406">
    <property type="pathway name" value="RHOQ GTPase cycle"/>
</dbReference>
<dbReference type="Reactome" id="R-DRE-9013408">
    <property type="pathway name" value="RHOG GTPase cycle"/>
</dbReference>
<dbReference type="PRO" id="PR:Q6P0D7"/>
<dbReference type="Proteomes" id="UP000000437">
    <property type="component" value="Alternate scaffold 12"/>
</dbReference>
<dbReference type="Proteomes" id="UP000000437">
    <property type="component" value="Chromosome 12"/>
</dbReference>
<dbReference type="Bgee" id="ENSDARG00000102470">
    <property type="expression patterns" value="Expressed in early embryo and 31 other cell types or tissues"/>
</dbReference>
<dbReference type="GO" id="GO:0005912">
    <property type="term" value="C:adherens junction"/>
    <property type="evidence" value="ECO:0007669"/>
    <property type="project" value="UniProtKB-SubCell"/>
</dbReference>
<dbReference type="GO" id="GO:0005923">
    <property type="term" value="C:bicellular tight junction"/>
    <property type="evidence" value="ECO:0007669"/>
    <property type="project" value="UniProtKB-SubCell"/>
</dbReference>
<dbReference type="GO" id="GO:0005911">
    <property type="term" value="C:cell-cell junction"/>
    <property type="evidence" value="ECO:0000318"/>
    <property type="project" value="GO_Central"/>
</dbReference>
<dbReference type="GO" id="GO:0005886">
    <property type="term" value="C:plasma membrane"/>
    <property type="evidence" value="ECO:0000318"/>
    <property type="project" value="GO_Central"/>
</dbReference>
<dbReference type="GO" id="GO:0071896">
    <property type="term" value="P:protein localization to adherens junction"/>
    <property type="evidence" value="ECO:0000318"/>
    <property type="project" value="GO_Central"/>
</dbReference>
<dbReference type="CDD" id="cd00071">
    <property type="entry name" value="GMPK"/>
    <property type="match status" value="1"/>
</dbReference>
<dbReference type="CDD" id="cd06799">
    <property type="entry name" value="PDZ_MPP3-MPP4-MPP7-like"/>
    <property type="match status" value="1"/>
</dbReference>
<dbReference type="FunFam" id="2.30.42.10:FF:000046">
    <property type="entry name" value="MAGUK p55 subfamily member 7"/>
    <property type="match status" value="1"/>
</dbReference>
<dbReference type="Gene3D" id="2.30.42.10">
    <property type="match status" value="1"/>
</dbReference>
<dbReference type="Gene3D" id="1.10.287.650">
    <property type="entry name" value="L27 domain"/>
    <property type="match status" value="1"/>
</dbReference>
<dbReference type="Gene3D" id="3.40.50.300">
    <property type="entry name" value="P-loop containing nucleotide triphosphate hydrolases"/>
    <property type="match status" value="1"/>
</dbReference>
<dbReference type="Gene3D" id="2.30.30.40">
    <property type="entry name" value="SH3 Domains"/>
    <property type="match status" value="1"/>
</dbReference>
<dbReference type="InterPro" id="IPR008145">
    <property type="entry name" value="GK/Ca_channel_bsu"/>
</dbReference>
<dbReference type="InterPro" id="IPR008144">
    <property type="entry name" value="Guanylate_kin-like_dom"/>
</dbReference>
<dbReference type="InterPro" id="IPR020590">
    <property type="entry name" value="Guanylate_kinase_CS"/>
</dbReference>
<dbReference type="InterPro" id="IPR014775">
    <property type="entry name" value="L27_C"/>
</dbReference>
<dbReference type="InterPro" id="IPR004172">
    <property type="entry name" value="L27_dom"/>
</dbReference>
<dbReference type="InterPro" id="IPR036892">
    <property type="entry name" value="L27_dom_sf"/>
</dbReference>
<dbReference type="InterPro" id="IPR050716">
    <property type="entry name" value="MAGUK"/>
</dbReference>
<dbReference type="InterPro" id="IPR027417">
    <property type="entry name" value="P-loop_NTPase"/>
</dbReference>
<dbReference type="InterPro" id="IPR001478">
    <property type="entry name" value="PDZ"/>
</dbReference>
<dbReference type="InterPro" id="IPR036034">
    <property type="entry name" value="PDZ_sf"/>
</dbReference>
<dbReference type="InterPro" id="IPR036028">
    <property type="entry name" value="SH3-like_dom_sf"/>
</dbReference>
<dbReference type="InterPro" id="IPR001452">
    <property type="entry name" value="SH3_domain"/>
</dbReference>
<dbReference type="PANTHER" id="PTHR23122">
    <property type="entry name" value="MEMBRANE-ASSOCIATED GUANYLATE KINASE MAGUK"/>
    <property type="match status" value="1"/>
</dbReference>
<dbReference type="Pfam" id="PF00625">
    <property type="entry name" value="Guanylate_kin"/>
    <property type="match status" value="1"/>
</dbReference>
<dbReference type="Pfam" id="PF02828">
    <property type="entry name" value="L27"/>
    <property type="match status" value="2"/>
</dbReference>
<dbReference type="Pfam" id="PF00595">
    <property type="entry name" value="PDZ"/>
    <property type="match status" value="1"/>
</dbReference>
<dbReference type="Pfam" id="PF07653">
    <property type="entry name" value="SH3_2"/>
    <property type="match status" value="1"/>
</dbReference>
<dbReference type="PRINTS" id="PR00452">
    <property type="entry name" value="SH3DOMAIN"/>
</dbReference>
<dbReference type="SMART" id="SM00072">
    <property type="entry name" value="GuKc"/>
    <property type="match status" value="1"/>
</dbReference>
<dbReference type="SMART" id="SM00569">
    <property type="entry name" value="L27"/>
    <property type="match status" value="2"/>
</dbReference>
<dbReference type="SMART" id="SM00228">
    <property type="entry name" value="PDZ"/>
    <property type="match status" value="1"/>
</dbReference>
<dbReference type="SMART" id="SM00326">
    <property type="entry name" value="SH3"/>
    <property type="match status" value="1"/>
</dbReference>
<dbReference type="SUPFAM" id="SSF101288">
    <property type="entry name" value="L27 domain"/>
    <property type="match status" value="1"/>
</dbReference>
<dbReference type="SUPFAM" id="SSF52540">
    <property type="entry name" value="P-loop containing nucleoside triphosphate hydrolases"/>
    <property type="match status" value="1"/>
</dbReference>
<dbReference type="SUPFAM" id="SSF50156">
    <property type="entry name" value="PDZ domain-like"/>
    <property type="match status" value="1"/>
</dbReference>
<dbReference type="SUPFAM" id="SSF50044">
    <property type="entry name" value="SH3-domain"/>
    <property type="match status" value="1"/>
</dbReference>
<dbReference type="PROSITE" id="PS00856">
    <property type="entry name" value="GUANYLATE_KINASE_1"/>
    <property type="match status" value="1"/>
</dbReference>
<dbReference type="PROSITE" id="PS50052">
    <property type="entry name" value="GUANYLATE_KINASE_2"/>
    <property type="match status" value="1"/>
</dbReference>
<dbReference type="PROSITE" id="PS51022">
    <property type="entry name" value="L27"/>
    <property type="match status" value="2"/>
</dbReference>
<dbReference type="PROSITE" id="PS50106">
    <property type="entry name" value="PDZ"/>
    <property type="match status" value="1"/>
</dbReference>
<dbReference type="PROSITE" id="PS50002">
    <property type="entry name" value="SH3"/>
    <property type="match status" value="1"/>
</dbReference>
<keyword id="KW-0965">Cell junction</keyword>
<keyword id="KW-0472">Membrane</keyword>
<keyword id="KW-1185">Reference proteome</keyword>
<keyword id="KW-0677">Repeat</keyword>
<keyword id="KW-0728">SH3 domain</keyword>
<keyword id="KW-0796">Tight junction</keyword>
<evidence type="ECO:0000250" key="1"/>
<evidence type="ECO:0000255" key="2">
    <source>
        <dbReference type="PROSITE-ProRule" id="PRU00100"/>
    </source>
</evidence>
<evidence type="ECO:0000255" key="3">
    <source>
        <dbReference type="PROSITE-ProRule" id="PRU00143"/>
    </source>
</evidence>
<evidence type="ECO:0000255" key="4">
    <source>
        <dbReference type="PROSITE-ProRule" id="PRU00192"/>
    </source>
</evidence>
<evidence type="ECO:0000255" key="5">
    <source>
        <dbReference type="PROSITE-ProRule" id="PRU00365"/>
    </source>
</evidence>
<evidence type="ECO:0000269" key="6">
    <source>
    </source>
</evidence>
<evidence type="ECO:0000305" key="7"/>
<evidence type="ECO:0000305" key="8">
    <source>
    </source>
</evidence>
<comment type="function">
    <text evidence="1">Acts as an important adapter that promotes epithelial cell polarity and tight junction formation. Involved in the assembly of protein complexes at sites of cell-cell contact (By similarity).</text>
</comment>
<comment type="subcellular location">
    <subcellularLocation>
        <location evidence="1">Membrane</location>
        <topology evidence="1">Peripheral membrane protein</topology>
    </subcellularLocation>
    <subcellularLocation>
        <location evidence="1">Cell junction</location>
        <location evidence="1">Tight junction</location>
    </subcellularLocation>
    <subcellularLocation>
        <location evidence="1">Cell junction</location>
        <location evidence="1">Adherens junction</location>
    </subcellularLocation>
</comment>
<comment type="similarity">
    <text evidence="7">Belongs to the MAGUK family.</text>
</comment>
<comment type="caution">
    <text evidence="8">Was originally thought to be the ortholog of mammalian DLG3.</text>
</comment>